<sequence length="812" mass="90502">MFSGMSLLLWGVLLGAALSVARPPSTLPDEVAPKTKTEVEPYSAQPGDRITLQCRLREDVQSINWVKNGVQLSETNRTRITGEEIQISNAGPEDNGVYACVTNGPSRTYTVLCSVNVSDALPSAEDDDEDDDNSSSEEKAAENSKPNRPLWSHPEKMEKKLHAVPAAKTVKFRCPANGTPTPTLRWLKNNRAFQQDQRIGGYKVRSQTWSLIMDSVVPSDKGNYTCIVENKYGAINHTYQLDVVERSPHRPILQAGLPANTSVTVGTTAEFSCKVYSDPQPHIQWLRHIEINGSRVASDGFPYVEILKTAGVNTSDKDMEVLHLRNVTFEDAGQYTCLAANSIGISHHSAWLTVLKVEDNKPALLASPLQLEIIIYCTGAAFVSAMVVTIIIFKMKHPSKKSDFNSQLAVHKLAKSIPVRRQVTVSGDSSSSMNSGVILVRRLSSSGTPMLSGLSEYELPEDPRWEVARDRLILGKPLGEGCFGQVVMAEAIGLDKEKPNKVTKVAVKMLKSDASEKDLSDLISEMEMMKMIGKHKNIINLLGACTQDGPLYVIVEYTSKGNLREYLRARRPPAMEYCYNPTCVPDQLLSFKDLVSCAYQVARGMDYLASKKCIHRDLAARNVLVTEDNIMKIADFGLARDIHHIDYYKKTTNGRLPVKWMAPEALFDRIYTHQSDVWSFGVLLWEIFTLGGSPYPGVPMEELFKLLKEGHRMDKPTNCTNELYMMMKDCWHAMPSQRPTFNQLVEDLDRILALSSNQEYLDLSMPVNQYSPCFPDTRSSTCSSGEDSMFSHDPLPDEPCLPKYSNGGLKKR</sequence>
<comment type="function">
    <text evidence="1">Tyrosine-protein kinase that acts as a cell-surface receptor for fibroblast growth factors and plays an essential role in the regulation of embryonic development, cell proliferation, differentiation and migration. Required for normal mesoderm patterning and normal skeletogenesis. Phosphorylates PLCG1, FRS2, GAB1 and SHB. Ligand binding leads to the activation of several signaling cascades. Activation of PLCG1 leads to the production of the cellular signaling molecules diacylglycerol and inositol-1,4,5-trisphosphate. Phosphorylation of FRS2 triggers recruitment of GRB2, GAB1, PIK3R1 and SOS1, and mediates activation of RAS, MAPK1/ERK2, MAPK3/ERK1 and the MAP kinase signaling pathway, as well as of the AKT1 signaling pathway. Promotes phosphorylation of SHC1, STAT1 and PTPN11/SHP2. In the nucleus, enhances RPS6KA1 and CREB1 activity and contributes to the regulation of transcription. FGFR1 signaling is down-regulated by ubiquitination, internalization and degradation (By similarity).</text>
</comment>
<comment type="catalytic activity">
    <reaction evidence="5">
        <text>L-tyrosyl-[protein] + ATP = O-phospho-L-tyrosyl-[protein] + ADP + H(+)</text>
        <dbReference type="Rhea" id="RHEA:10596"/>
        <dbReference type="Rhea" id="RHEA-COMP:10136"/>
        <dbReference type="Rhea" id="RHEA-COMP:20101"/>
        <dbReference type="ChEBI" id="CHEBI:15378"/>
        <dbReference type="ChEBI" id="CHEBI:30616"/>
        <dbReference type="ChEBI" id="CHEBI:46858"/>
        <dbReference type="ChEBI" id="CHEBI:61978"/>
        <dbReference type="ChEBI" id="CHEBI:456216"/>
        <dbReference type="EC" id="2.7.10.1"/>
    </reaction>
</comment>
<comment type="activity regulation">
    <text evidence="1">Present in an inactive conformation in the absence of bound ligand. Ligand binding leads to dimerization and activation by sequential autophosphorylation on tyrosine residues (By similarity).</text>
</comment>
<comment type="subunit">
    <text evidence="1 7">Monomer. Homodimer after ligand binding (By similarity). Interacts with il17rd.</text>
</comment>
<comment type="subcellular location">
    <subcellularLocation>
        <location evidence="1">Cell membrane</location>
        <topology evidence="1">Single-pass type I membrane protein</topology>
    </subcellularLocation>
    <subcellularLocation>
        <location evidence="1">Nucleus</location>
    </subcellularLocation>
    <subcellularLocation>
        <location evidence="1">Cytoplasm</location>
        <location evidence="1">Cytosol</location>
    </subcellularLocation>
    <subcellularLocation>
        <location evidence="1">Cytoplasmic vesicle</location>
    </subcellularLocation>
    <text evidence="1">After ligand binding, both receptor and ligand are rapidly internalized. Can translocate to the nucleus after internalization, or by translocation from the endoplasmic reticulum or Golgi apparatus to the cytosol, and from there to the nucleus (By similarity).</text>
</comment>
<comment type="alternative products">
    <event type="alternative splicing"/>
    <isoform>
        <id>P22182-1</id>
        <name>1</name>
        <sequence type="displayed"/>
    </isoform>
    <isoform>
        <id>P22182-2</id>
        <name>2</name>
        <sequence type="described" ref="VSP_011847"/>
    </isoform>
</comment>
<comment type="domain">
    <text evidence="1">The second and third Ig-like domains directly interact with fibroblast growth factors (FGF) and heparan sulfate proteoglycans. Isoforms lacking the first Ig-like domain have higher affinity for fibroblast growth factors (FGF) and heparan sulfate proteoglycans than isoforms with all three Ig-like domains (By similarity).</text>
</comment>
<comment type="PTM">
    <text evidence="1">Autophosphorylated. Binding of FGF family members together with heparan sulfate proteoglycan or heparin promotes receptor dimerization and autophosphorylation on tyrosine residues. Autophosphorylation occurs in trans between the two FGFR molecules present in the dimer and proceeds in a highly ordered manner. Phosphotyrosine residues provide docking sites for interacting proteins and so are crucial for FGFR1 function and its regulation (By similarity).</text>
</comment>
<comment type="PTM">
    <text evidence="1">Ubiquitinated. FGFR1 is rapidly ubiquitinated after autophosphorylation, leading to internalization and degradation (By similarity).</text>
</comment>
<comment type="PTM">
    <text evidence="1">N-glycosylated in the endoplasmic reticulum. The N-glycan chains undergo further maturation to an Endo H-resistant form in the Golgi apparatus (By similarity).</text>
</comment>
<comment type="similarity">
    <text evidence="4">Belongs to the protein kinase superfamily. Tyr protein kinase family. Fibroblast growth factor receptor subfamily.</text>
</comment>
<protein>
    <recommendedName>
        <fullName>Fibroblast growth factor receptor 1</fullName>
        <shortName>FGFR-1</shortName>
        <ecNumber>2.7.10.1</ecNumber>
    </recommendedName>
</protein>
<evidence type="ECO:0000250" key="1"/>
<evidence type="ECO:0000255" key="2"/>
<evidence type="ECO:0000255" key="3">
    <source>
        <dbReference type="PROSITE-ProRule" id="PRU00114"/>
    </source>
</evidence>
<evidence type="ECO:0000255" key="4">
    <source>
        <dbReference type="PROSITE-ProRule" id="PRU00159"/>
    </source>
</evidence>
<evidence type="ECO:0000255" key="5">
    <source>
        <dbReference type="PROSITE-ProRule" id="PRU10028"/>
    </source>
</evidence>
<evidence type="ECO:0000256" key="6">
    <source>
        <dbReference type="SAM" id="MobiDB-lite"/>
    </source>
</evidence>
<evidence type="ECO:0000269" key="7">
    <source>
    </source>
</evidence>
<evidence type="ECO:0000303" key="8">
    <source>
    </source>
</evidence>
<evidence type="ECO:0000305" key="9"/>
<keyword id="KW-0025">Alternative splicing</keyword>
<keyword id="KW-0067">ATP-binding</keyword>
<keyword id="KW-1003">Cell membrane</keyword>
<keyword id="KW-0963">Cytoplasm</keyword>
<keyword id="KW-0968">Cytoplasmic vesicle</keyword>
<keyword id="KW-1015">Disulfide bond</keyword>
<keyword id="KW-0325">Glycoprotein</keyword>
<keyword id="KW-0393">Immunoglobulin domain</keyword>
<keyword id="KW-0418">Kinase</keyword>
<keyword id="KW-0472">Membrane</keyword>
<keyword id="KW-0547">Nucleotide-binding</keyword>
<keyword id="KW-0539">Nucleus</keyword>
<keyword id="KW-0597">Phosphoprotein</keyword>
<keyword id="KW-0675">Receptor</keyword>
<keyword id="KW-1185">Reference proteome</keyword>
<keyword id="KW-0677">Repeat</keyword>
<keyword id="KW-0732">Signal</keyword>
<keyword id="KW-0808">Transferase</keyword>
<keyword id="KW-0812">Transmembrane</keyword>
<keyword id="KW-1133">Transmembrane helix</keyword>
<keyword id="KW-0829">Tyrosine-protein kinase</keyword>
<keyword id="KW-0832">Ubl conjugation</keyword>
<name>FGFR1_XENLA</name>
<accession>P22182</accession>
<accession>Q03836</accession>
<reference key="1">
    <citation type="journal article" date="1990" name="Proc. Natl. Acad. Sci. U.S.A.">
        <title>Regulation of the fibroblast growth factor receptor in early Xenopus embryos.</title>
        <authorList>
            <person name="Musci T.J."/>
            <person name="Amaya E."/>
            <person name="Kirschner M.W."/>
        </authorList>
    </citation>
    <scope>NUCLEOTIDE SEQUENCE [MRNA] (ISOFORM 1)</scope>
</reference>
<reference key="2">
    <citation type="journal article" date="1991" name="Mol. Cell. Biol.">
        <title>cDNA cloning and developmental expression of fibroblast growth factor receptors from Xenopus laevis.</title>
        <authorList>
            <person name="Friesel R.E."/>
            <person name="Dawid I.B."/>
        </authorList>
    </citation>
    <scope>NUCLEOTIDE SEQUENCE [MRNA] (ISOFORM 2)</scope>
</reference>
<reference key="3">
    <citation type="journal article" date="2003" name="J. Biol. Chem.">
        <title>Sef inhibits fibroblast growth factor signaling by inhibiting FGFR1 tyrosine phosphorylation and subsequent ERK activation.</title>
        <authorList>
            <person name="Kovalenko D."/>
            <person name="Yang X."/>
            <person name="Nadeau R.J."/>
            <person name="Harkins L.K."/>
            <person name="Friesel R."/>
        </authorList>
    </citation>
    <scope>INTERACTION WITH IL17RD</scope>
</reference>
<dbReference type="EC" id="2.7.10.1"/>
<dbReference type="EMBL" id="U24491">
    <property type="protein sequence ID" value="AAA86868.1"/>
    <property type="molecule type" value="mRNA"/>
</dbReference>
<dbReference type="EMBL" id="M62322">
    <property type="protein sequence ID" value="AAA49993.1"/>
    <property type="molecule type" value="mRNA"/>
</dbReference>
<dbReference type="PIR" id="A36477">
    <property type="entry name" value="A36477"/>
</dbReference>
<dbReference type="RefSeq" id="NP_001081157.1">
    <property type="nucleotide sequence ID" value="NM_001087688.1"/>
</dbReference>
<dbReference type="RefSeq" id="NP_001081338.1">
    <property type="nucleotide sequence ID" value="NM_001087869.1"/>
</dbReference>
<dbReference type="SMR" id="P22182"/>
<dbReference type="BioGRID" id="99020">
    <property type="interactions" value="2"/>
</dbReference>
<dbReference type="IntAct" id="P22182">
    <property type="interactions" value="1"/>
</dbReference>
<dbReference type="MINT" id="P22182"/>
<dbReference type="GlyCosmos" id="P22182">
    <property type="glycosylation" value="9 sites, No reported glycans"/>
</dbReference>
<dbReference type="GeneID" id="397782"/>
<dbReference type="KEGG" id="xla:397782"/>
<dbReference type="CTD" id="397782"/>
<dbReference type="OrthoDB" id="5984265at2759"/>
<dbReference type="BRENDA" id="2.7.10.1">
    <property type="organism ID" value="6725"/>
</dbReference>
<dbReference type="Proteomes" id="UP000186698">
    <property type="component" value="Chromosome 3S"/>
</dbReference>
<dbReference type="Bgee" id="394418">
    <property type="expression patterns" value="Expressed in gastrula and 19 other cell types or tissues"/>
</dbReference>
<dbReference type="GO" id="GO:0031410">
    <property type="term" value="C:cytoplasmic vesicle"/>
    <property type="evidence" value="ECO:0007669"/>
    <property type="project" value="UniProtKB-KW"/>
</dbReference>
<dbReference type="GO" id="GO:0005829">
    <property type="term" value="C:cytosol"/>
    <property type="evidence" value="ECO:0007669"/>
    <property type="project" value="UniProtKB-SubCell"/>
</dbReference>
<dbReference type="GO" id="GO:0005634">
    <property type="term" value="C:nucleus"/>
    <property type="evidence" value="ECO:0007669"/>
    <property type="project" value="UniProtKB-SubCell"/>
</dbReference>
<dbReference type="GO" id="GO:0005886">
    <property type="term" value="C:plasma membrane"/>
    <property type="evidence" value="ECO:0000318"/>
    <property type="project" value="GO_Central"/>
</dbReference>
<dbReference type="GO" id="GO:0043235">
    <property type="term" value="C:receptor complex"/>
    <property type="evidence" value="ECO:0000318"/>
    <property type="project" value="GO_Central"/>
</dbReference>
<dbReference type="GO" id="GO:0005524">
    <property type="term" value="F:ATP binding"/>
    <property type="evidence" value="ECO:0007669"/>
    <property type="project" value="UniProtKB-KW"/>
</dbReference>
<dbReference type="GO" id="GO:0017134">
    <property type="term" value="F:fibroblast growth factor binding"/>
    <property type="evidence" value="ECO:0000318"/>
    <property type="project" value="GO_Central"/>
</dbReference>
<dbReference type="GO" id="GO:0005007">
    <property type="term" value="F:fibroblast growth factor receptor activity"/>
    <property type="evidence" value="ECO:0000250"/>
    <property type="project" value="UniProtKB"/>
</dbReference>
<dbReference type="GO" id="GO:0048513">
    <property type="term" value="P:animal organ development"/>
    <property type="evidence" value="ECO:0007669"/>
    <property type="project" value="UniProtKB-ARBA"/>
</dbReference>
<dbReference type="GO" id="GO:0030154">
    <property type="term" value="P:cell differentiation"/>
    <property type="evidence" value="ECO:0007669"/>
    <property type="project" value="UniProtKB-ARBA"/>
</dbReference>
<dbReference type="GO" id="GO:0008543">
    <property type="term" value="P:fibroblast growth factor receptor signaling pathway"/>
    <property type="evidence" value="ECO:0000318"/>
    <property type="project" value="GO_Central"/>
</dbReference>
<dbReference type="GO" id="GO:0045597">
    <property type="term" value="P:positive regulation of cell differentiation"/>
    <property type="evidence" value="ECO:0000318"/>
    <property type="project" value="GO_Central"/>
</dbReference>
<dbReference type="GO" id="GO:0008284">
    <property type="term" value="P:positive regulation of cell population proliferation"/>
    <property type="evidence" value="ECO:0000318"/>
    <property type="project" value="GO_Central"/>
</dbReference>
<dbReference type="GO" id="GO:0010604">
    <property type="term" value="P:positive regulation of macromolecule metabolic process"/>
    <property type="evidence" value="ECO:0007669"/>
    <property type="project" value="UniProtKB-ARBA"/>
</dbReference>
<dbReference type="GO" id="GO:0043410">
    <property type="term" value="P:positive regulation of MAPK cascade"/>
    <property type="evidence" value="ECO:0000318"/>
    <property type="project" value="GO_Central"/>
</dbReference>
<dbReference type="GO" id="GO:0080090">
    <property type="term" value="P:regulation of primary metabolic process"/>
    <property type="evidence" value="ECO:0007669"/>
    <property type="project" value="UniProtKB-ARBA"/>
</dbReference>
<dbReference type="CDD" id="cd04973">
    <property type="entry name" value="IgI_1_FGFR"/>
    <property type="match status" value="1"/>
</dbReference>
<dbReference type="CDD" id="cd05857">
    <property type="entry name" value="IgI_2_FGFR"/>
    <property type="match status" value="1"/>
</dbReference>
<dbReference type="CDD" id="cd05098">
    <property type="entry name" value="PTKc_FGFR1"/>
    <property type="match status" value="1"/>
</dbReference>
<dbReference type="FunFam" id="1.10.510.10:FF:000007">
    <property type="entry name" value="Fibroblast growth factor receptor"/>
    <property type="match status" value="1"/>
</dbReference>
<dbReference type="FunFam" id="2.60.40.10:FF:000016">
    <property type="entry name" value="Fibroblast growth factor receptor"/>
    <property type="match status" value="1"/>
</dbReference>
<dbReference type="FunFam" id="2.60.40.10:FF:000020">
    <property type="entry name" value="Fibroblast growth factor receptor"/>
    <property type="match status" value="1"/>
</dbReference>
<dbReference type="FunFam" id="3.30.200.20:FF:000011">
    <property type="entry name" value="Fibroblast growth factor receptor"/>
    <property type="match status" value="1"/>
</dbReference>
<dbReference type="Gene3D" id="2.60.40.10">
    <property type="entry name" value="Immunoglobulins"/>
    <property type="match status" value="3"/>
</dbReference>
<dbReference type="Gene3D" id="3.30.200.20">
    <property type="entry name" value="Phosphorylase Kinase, domain 1"/>
    <property type="match status" value="1"/>
</dbReference>
<dbReference type="Gene3D" id="1.10.510.10">
    <property type="entry name" value="Transferase(Phosphotransferase) domain 1"/>
    <property type="match status" value="1"/>
</dbReference>
<dbReference type="InterPro" id="IPR028174">
    <property type="entry name" value="FGF_rcpt_1"/>
</dbReference>
<dbReference type="InterPro" id="IPR016248">
    <property type="entry name" value="FGF_rcpt_fam"/>
</dbReference>
<dbReference type="InterPro" id="IPR007110">
    <property type="entry name" value="Ig-like_dom"/>
</dbReference>
<dbReference type="InterPro" id="IPR036179">
    <property type="entry name" value="Ig-like_dom_sf"/>
</dbReference>
<dbReference type="InterPro" id="IPR013783">
    <property type="entry name" value="Ig-like_fold"/>
</dbReference>
<dbReference type="InterPro" id="IPR013098">
    <property type="entry name" value="Ig_I-set"/>
</dbReference>
<dbReference type="InterPro" id="IPR003599">
    <property type="entry name" value="Ig_sub"/>
</dbReference>
<dbReference type="InterPro" id="IPR003598">
    <property type="entry name" value="Ig_sub2"/>
</dbReference>
<dbReference type="InterPro" id="IPR013151">
    <property type="entry name" value="Immunoglobulin_dom"/>
</dbReference>
<dbReference type="InterPro" id="IPR011009">
    <property type="entry name" value="Kinase-like_dom_sf"/>
</dbReference>
<dbReference type="InterPro" id="IPR000719">
    <property type="entry name" value="Prot_kinase_dom"/>
</dbReference>
<dbReference type="InterPro" id="IPR017441">
    <property type="entry name" value="Protein_kinase_ATP_BS"/>
</dbReference>
<dbReference type="InterPro" id="IPR050122">
    <property type="entry name" value="RTK"/>
</dbReference>
<dbReference type="InterPro" id="IPR001245">
    <property type="entry name" value="Ser-Thr/Tyr_kinase_cat_dom"/>
</dbReference>
<dbReference type="InterPro" id="IPR008266">
    <property type="entry name" value="Tyr_kinase_AS"/>
</dbReference>
<dbReference type="InterPro" id="IPR020635">
    <property type="entry name" value="Tyr_kinase_cat_dom"/>
</dbReference>
<dbReference type="PANTHER" id="PTHR24416:SF131">
    <property type="entry name" value="FIBROBLAST GROWTH FACTOR RECEPTOR 1"/>
    <property type="match status" value="1"/>
</dbReference>
<dbReference type="PANTHER" id="PTHR24416">
    <property type="entry name" value="TYROSINE-PROTEIN KINASE RECEPTOR"/>
    <property type="match status" value="1"/>
</dbReference>
<dbReference type="Pfam" id="PF07679">
    <property type="entry name" value="I-set"/>
    <property type="match status" value="2"/>
</dbReference>
<dbReference type="Pfam" id="PF00047">
    <property type="entry name" value="ig"/>
    <property type="match status" value="1"/>
</dbReference>
<dbReference type="Pfam" id="PF07714">
    <property type="entry name" value="PK_Tyr_Ser-Thr"/>
    <property type="match status" value="1"/>
</dbReference>
<dbReference type="PIRSF" id="PIRSF000628">
    <property type="entry name" value="FGFR"/>
    <property type="match status" value="1"/>
</dbReference>
<dbReference type="PRINTS" id="PR00109">
    <property type="entry name" value="TYRKINASE"/>
</dbReference>
<dbReference type="SMART" id="SM00409">
    <property type="entry name" value="IG"/>
    <property type="match status" value="3"/>
</dbReference>
<dbReference type="SMART" id="SM00408">
    <property type="entry name" value="IGc2"/>
    <property type="match status" value="3"/>
</dbReference>
<dbReference type="SMART" id="SM00219">
    <property type="entry name" value="TyrKc"/>
    <property type="match status" value="1"/>
</dbReference>
<dbReference type="SUPFAM" id="SSF48726">
    <property type="entry name" value="Immunoglobulin"/>
    <property type="match status" value="3"/>
</dbReference>
<dbReference type="SUPFAM" id="SSF56112">
    <property type="entry name" value="Protein kinase-like (PK-like)"/>
    <property type="match status" value="1"/>
</dbReference>
<dbReference type="PROSITE" id="PS50835">
    <property type="entry name" value="IG_LIKE"/>
    <property type="match status" value="3"/>
</dbReference>
<dbReference type="PROSITE" id="PS00107">
    <property type="entry name" value="PROTEIN_KINASE_ATP"/>
    <property type="match status" value="1"/>
</dbReference>
<dbReference type="PROSITE" id="PS50011">
    <property type="entry name" value="PROTEIN_KINASE_DOM"/>
    <property type="match status" value="1"/>
</dbReference>
<dbReference type="PROSITE" id="PS00109">
    <property type="entry name" value="PROTEIN_KINASE_TYR"/>
    <property type="match status" value="1"/>
</dbReference>
<organism>
    <name type="scientific">Xenopus laevis</name>
    <name type="common">African clawed frog</name>
    <dbReference type="NCBI Taxonomy" id="8355"/>
    <lineage>
        <taxon>Eukaryota</taxon>
        <taxon>Metazoa</taxon>
        <taxon>Chordata</taxon>
        <taxon>Craniata</taxon>
        <taxon>Vertebrata</taxon>
        <taxon>Euteleostomi</taxon>
        <taxon>Amphibia</taxon>
        <taxon>Batrachia</taxon>
        <taxon>Anura</taxon>
        <taxon>Pipoidea</taxon>
        <taxon>Pipidae</taxon>
        <taxon>Xenopodinae</taxon>
        <taxon>Xenopus</taxon>
        <taxon>Xenopus</taxon>
    </lineage>
</organism>
<proteinExistence type="evidence at protein level"/>
<feature type="signal peptide" evidence="1">
    <location>
        <begin position="1"/>
        <end position="20"/>
    </location>
</feature>
<feature type="chain" id="PRO_0000016792" description="Fibroblast growth factor receptor 1">
    <location>
        <begin position="21"/>
        <end position="812"/>
    </location>
</feature>
<feature type="topological domain" description="Extracellular" evidence="2">
    <location>
        <begin position="21"/>
        <end position="371"/>
    </location>
</feature>
<feature type="transmembrane region" description="Helical" evidence="2">
    <location>
        <begin position="372"/>
        <end position="393"/>
    </location>
</feature>
<feature type="topological domain" description="Cytoplasmic" evidence="2">
    <location>
        <begin position="394"/>
        <end position="812"/>
    </location>
</feature>
<feature type="domain" description="Ig-like C2-type 1">
    <location>
        <begin position="25"/>
        <end position="118"/>
    </location>
</feature>
<feature type="domain" description="Ig-like C2-type 2">
    <location>
        <begin position="154"/>
        <end position="242"/>
    </location>
</feature>
<feature type="domain" description="Ig-like C2-type 3">
    <location>
        <begin position="251"/>
        <end position="353"/>
    </location>
</feature>
<feature type="domain" description="Protein kinase" evidence="4">
    <location>
        <begin position="472"/>
        <end position="761"/>
    </location>
</feature>
<feature type="region of interest" description="Disordered" evidence="6">
    <location>
        <begin position="121"/>
        <end position="153"/>
    </location>
</feature>
<feature type="region of interest" description="Disordered" evidence="6">
    <location>
        <begin position="784"/>
        <end position="812"/>
    </location>
</feature>
<feature type="compositionally biased region" description="Acidic residues" evidence="6">
    <location>
        <begin position="124"/>
        <end position="135"/>
    </location>
</feature>
<feature type="active site" description="Proton acceptor" evidence="4 5">
    <location>
        <position position="617"/>
    </location>
</feature>
<feature type="binding site" evidence="4">
    <location>
        <begin position="478"/>
        <end position="484"/>
    </location>
    <ligand>
        <name>ATP</name>
        <dbReference type="ChEBI" id="CHEBI:30616"/>
    </ligand>
</feature>
<feature type="binding site" evidence="4">
    <location>
        <position position="508"/>
    </location>
    <ligand>
        <name>ATP</name>
        <dbReference type="ChEBI" id="CHEBI:30616"/>
    </ligand>
</feature>
<feature type="binding site" evidence="4">
    <location>
        <begin position="556"/>
        <end position="558"/>
    </location>
    <ligand>
        <name>ATP</name>
        <dbReference type="ChEBI" id="CHEBI:30616"/>
    </ligand>
</feature>
<feature type="binding site" evidence="4">
    <location>
        <position position="562"/>
    </location>
    <ligand>
        <name>ATP</name>
        <dbReference type="ChEBI" id="CHEBI:30616"/>
    </ligand>
</feature>
<feature type="binding site" evidence="4">
    <location>
        <position position="621"/>
    </location>
    <ligand>
        <name>ATP</name>
        <dbReference type="ChEBI" id="CHEBI:30616"/>
    </ligand>
</feature>
<feature type="binding site" evidence="4">
    <location>
        <position position="635"/>
    </location>
    <ligand>
        <name>ATP</name>
        <dbReference type="ChEBI" id="CHEBI:30616"/>
    </ligand>
</feature>
<feature type="modified residue" description="Phosphotyrosine; by autocatalysis" evidence="1">
    <location>
        <position position="457"/>
    </location>
</feature>
<feature type="modified residue" description="Phosphotyrosine; by autocatalysis" evidence="1">
    <location>
        <position position="577"/>
    </location>
</feature>
<feature type="modified residue" description="Phosphotyrosine; by autocatalysis" evidence="1">
    <location>
        <position position="579"/>
    </location>
</feature>
<feature type="modified residue" description="Phosphotyrosine; by autocatalysis" evidence="1">
    <location>
        <position position="647"/>
    </location>
</feature>
<feature type="modified residue" description="Phosphotyrosine; by autocatalysis" evidence="1">
    <location>
        <position position="648"/>
    </location>
</feature>
<feature type="modified residue" description="Phosphotyrosine; by autocatalysis" evidence="1">
    <location>
        <position position="724"/>
    </location>
</feature>
<feature type="modified residue" description="Phosphotyrosine; by autocatalysis" evidence="1">
    <location>
        <position position="760"/>
    </location>
</feature>
<feature type="glycosylation site" description="N-linked (GlcNAc...) asparagine" evidence="2">
    <location>
        <position position="76"/>
    </location>
</feature>
<feature type="glycosylation site" description="N-linked (GlcNAc...) asparagine" evidence="2">
    <location>
        <position position="116"/>
    </location>
</feature>
<feature type="glycosylation site" description="N-linked (GlcNAc...) asparagine" evidence="2">
    <location>
        <position position="133"/>
    </location>
</feature>
<feature type="glycosylation site" description="N-linked (GlcNAc...) asparagine" evidence="2">
    <location>
        <position position="223"/>
    </location>
</feature>
<feature type="glycosylation site" description="N-linked (GlcNAc...) asparagine" evidence="2">
    <location>
        <position position="236"/>
    </location>
</feature>
<feature type="glycosylation site" description="N-linked (GlcNAc...) asparagine" evidence="2">
    <location>
        <position position="260"/>
    </location>
</feature>
<feature type="glycosylation site" description="N-linked (GlcNAc...) asparagine" evidence="2">
    <location>
        <position position="292"/>
    </location>
</feature>
<feature type="glycosylation site" description="N-linked (GlcNAc...) asparagine" evidence="2">
    <location>
        <position position="313"/>
    </location>
</feature>
<feature type="glycosylation site" description="N-linked (GlcNAc...) asparagine" evidence="2">
    <location>
        <position position="326"/>
    </location>
</feature>
<feature type="disulfide bond" evidence="3">
    <location>
        <begin position="54"/>
        <end position="100"/>
    </location>
</feature>
<feature type="disulfide bond" evidence="3">
    <location>
        <begin position="174"/>
        <end position="226"/>
    </location>
</feature>
<feature type="disulfide bond" evidence="3">
    <location>
        <begin position="273"/>
        <end position="337"/>
    </location>
</feature>
<feature type="splice variant" id="VSP_011847" description="In isoform 2." evidence="8">
    <location>
        <begin position="31"/>
        <end position="118"/>
    </location>
</feature>
<feature type="sequence conflict" description="In Ref. 2; AAA49993." evidence="9" ref="2">
    <original>N</original>
    <variation>G</variation>
    <location>
        <position position="190"/>
    </location>
</feature>
<feature type="sequence conflict" description="In Ref. 2; AAA49993." evidence="9" ref="2">
    <original>V</original>
    <variation>L</variation>
    <location>
        <position position="419"/>
    </location>
</feature>
<feature type="sequence conflict" description="In Ref. 2; AAA49993." evidence="9" ref="2">
    <original>G</original>
    <variation>R</variation>
    <location>
        <position position="637"/>
    </location>
</feature>
<feature type="sequence conflict" description="In Ref. 2; AAA49993." evidence="9" ref="2">
    <original>M</original>
    <variation>V</variation>
    <location>
        <position position="789"/>
    </location>
</feature>
<gene>
    <name type="primary">fgfr1</name>
    <name type="synonym">fgfra2</name>
</gene>